<dbReference type="EC" id="3.5.4.19"/>
<dbReference type="EC" id="3.6.1.31"/>
<dbReference type="EMBL" id="CU329671">
    <property type="protein sequence ID" value="CAA18379.1"/>
    <property type="molecule type" value="Genomic_DNA"/>
</dbReference>
<dbReference type="PIR" id="T40073">
    <property type="entry name" value="T40073"/>
</dbReference>
<dbReference type="RefSeq" id="NP_595830.1">
    <property type="nucleotide sequence ID" value="NM_001021734.2"/>
</dbReference>
<dbReference type="SMR" id="O59667"/>
<dbReference type="BioGRID" id="276821">
    <property type="interactions" value="23"/>
</dbReference>
<dbReference type="FunCoup" id="O59667">
    <property type="interactions" value="104"/>
</dbReference>
<dbReference type="STRING" id="284812.O59667"/>
<dbReference type="iPTMnet" id="O59667"/>
<dbReference type="PaxDb" id="4896-SPBC29A3.02c.1"/>
<dbReference type="EnsemblFungi" id="SPBC29A3.02c.1">
    <property type="protein sequence ID" value="SPBC29A3.02c.1:pep"/>
    <property type="gene ID" value="SPBC29A3.02c"/>
</dbReference>
<dbReference type="GeneID" id="2540290"/>
<dbReference type="KEGG" id="spo:2540290"/>
<dbReference type="PomBase" id="SPBC29A3.02c">
    <property type="gene designation" value="his7"/>
</dbReference>
<dbReference type="VEuPathDB" id="FungiDB:SPBC29A3.02c"/>
<dbReference type="eggNOG" id="KOG4311">
    <property type="taxonomic scope" value="Eukaryota"/>
</dbReference>
<dbReference type="HOGENOM" id="CLU_041225_0_0_1"/>
<dbReference type="InParanoid" id="O59667"/>
<dbReference type="OMA" id="QTGKGFC"/>
<dbReference type="PhylomeDB" id="O59667"/>
<dbReference type="UniPathway" id="UPA00031">
    <property type="reaction ID" value="UER00007"/>
</dbReference>
<dbReference type="UniPathway" id="UPA00031">
    <property type="reaction ID" value="UER00008"/>
</dbReference>
<dbReference type="PRO" id="PR:O59667"/>
<dbReference type="Proteomes" id="UP000002485">
    <property type="component" value="Chromosome II"/>
</dbReference>
<dbReference type="GO" id="GO:0005829">
    <property type="term" value="C:cytosol"/>
    <property type="evidence" value="ECO:0007005"/>
    <property type="project" value="PomBase"/>
</dbReference>
<dbReference type="GO" id="GO:0005634">
    <property type="term" value="C:nucleus"/>
    <property type="evidence" value="ECO:0007005"/>
    <property type="project" value="PomBase"/>
</dbReference>
<dbReference type="GO" id="GO:0005524">
    <property type="term" value="F:ATP binding"/>
    <property type="evidence" value="ECO:0007669"/>
    <property type="project" value="UniProtKB-KW"/>
</dbReference>
<dbReference type="GO" id="GO:0004635">
    <property type="term" value="F:phosphoribosyl-AMP cyclohydrolase activity"/>
    <property type="evidence" value="ECO:0000316"/>
    <property type="project" value="PomBase"/>
</dbReference>
<dbReference type="GO" id="GO:0004636">
    <property type="term" value="F:phosphoribosyl-ATP diphosphatase activity"/>
    <property type="evidence" value="ECO:0000266"/>
    <property type="project" value="PomBase"/>
</dbReference>
<dbReference type="GO" id="GO:0000105">
    <property type="term" value="P:L-histidine biosynthetic process"/>
    <property type="evidence" value="ECO:0000316"/>
    <property type="project" value="PomBase"/>
</dbReference>
<dbReference type="CDD" id="cd11546">
    <property type="entry name" value="NTP-PPase_His4"/>
    <property type="match status" value="1"/>
</dbReference>
<dbReference type="FunFam" id="1.10.287.1080:FF:000002">
    <property type="entry name" value="Histidine biosynthesis bifunctional protein HisIE"/>
    <property type="match status" value="1"/>
</dbReference>
<dbReference type="FunFam" id="3.10.20.810:FF:000002">
    <property type="entry name" value="Histidine biosynthesis trifunctional protein"/>
    <property type="match status" value="1"/>
</dbReference>
<dbReference type="Gene3D" id="1.10.287.1080">
    <property type="entry name" value="MazG-like"/>
    <property type="match status" value="1"/>
</dbReference>
<dbReference type="Gene3D" id="3.10.20.810">
    <property type="entry name" value="Phosphoribosyl-AMP cyclohydrolase"/>
    <property type="match status" value="1"/>
</dbReference>
<dbReference type="InterPro" id="IPR008179">
    <property type="entry name" value="HisE"/>
</dbReference>
<dbReference type="InterPro" id="IPR021130">
    <property type="entry name" value="PRib-ATP_PPHydrolase-like"/>
</dbReference>
<dbReference type="InterPro" id="IPR002496">
    <property type="entry name" value="PRib_AMP_CycHydrolase_dom"/>
</dbReference>
<dbReference type="InterPro" id="IPR038019">
    <property type="entry name" value="PRib_AMP_CycHydrolase_sf"/>
</dbReference>
<dbReference type="NCBIfam" id="TIGR03188">
    <property type="entry name" value="histidine_hisI"/>
    <property type="match status" value="1"/>
</dbReference>
<dbReference type="PANTHER" id="PTHR42945">
    <property type="entry name" value="HISTIDINE BIOSYNTHESIS BIFUNCTIONAL PROTEIN"/>
    <property type="match status" value="1"/>
</dbReference>
<dbReference type="PANTHER" id="PTHR42945:SF1">
    <property type="entry name" value="HISTIDINE BIOSYNTHESIS BIFUNCTIONAL PROTEIN HIS7"/>
    <property type="match status" value="1"/>
</dbReference>
<dbReference type="Pfam" id="PF01502">
    <property type="entry name" value="PRA-CH"/>
    <property type="match status" value="1"/>
</dbReference>
<dbReference type="Pfam" id="PF01503">
    <property type="entry name" value="PRA-PH"/>
    <property type="match status" value="1"/>
</dbReference>
<dbReference type="SUPFAM" id="SSF101386">
    <property type="entry name" value="all-alpha NTP pyrophosphatases"/>
    <property type="match status" value="1"/>
</dbReference>
<dbReference type="SUPFAM" id="SSF141734">
    <property type="entry name" value="HisI-like"/>
    <property type="match status" value="1"/>
</dbReference>
<reference evidence="5" key="1">
    <citation type="journal article" date="2002" name="Nature">
        <title>The genome sequence of Schizosaccharomyces pombe.</title>
        <authorList>
            <person name="Wood V."/>
            <person name="Gwilliam R."/>
            <person name="Rajandream M.A."/>
            <person name="Lyne M.H."/>
            <person name="Lyne R."/>
            <person name="Stewart A."/>
            <person name="Sgouros J.G."/>
            <person name="Peat N."/>
            <person name="Hayles J."/>
            <person name="Baker S.G."/>
            <person name="Basham D."/>
            <person name="Bowman S."/>
            <person name="Brooks K."/>
            <person name="Brown D."/>
            <person name="Brown S."/>
            <person name="Chillingworth T."/>
            <person name="Churcher C.M."/>
            <person name="Collins M."/>
            <person name="Connor R."/>
            <person name="Cronin A."/>
            <person name="Davis P."/>
            <person name="Feltwell T."/>
            <person name="Fraser A."/>
            <person name="Gentles S."/>
            <person name="Goble A."/>
            <person name="Hamlin N."/>
            <person name="Harris D.E."/>
            <person name="Hidalgo J."/>
            <person name="Hodgson G."/>
            <person name="Holroyd S."/>
            <person name="Hornsby T."/>
            <person name="Howarth S."/>
            <person name="Huckle E.J."/>
            <person name="Hunt S."/>
            <person name="Jagels K."/>
            <person name="James K.D."/>
            <person name="Jones L."/>
            <person name="Jones M."/>
            <person name="Leather S."/>
            <person name="McDonald S."/>
            <person name="McLean J."/>
            <person name="Mooney P."/>
            <person name="Moule S."/>
            <person name="Mungall K.L."/>
            <person name="Murphy L.D."/>
            <person name="Niblett D."/>
            <person name="Odell C."/>
            <person name="Oliver K."/>
            <person name="O'Neil S."/>
            <person name="Pearson D."/>
            <person name="Quail M.A."/>
            <person name="Rabbinowitsch E."/>
            <person name="Rutherford K.M."/>
            <person name="Rutter S."/>
            <person name="Saunders D."/>
            <person name="Seeger K."/>
            <person name="Sharp S."/>
            <person name="Skelton J."/>
            <person name="Simmonds M.N."/>
            <person name="Squares R."/>
            <person name="Squares S."/>
            <person name="Stevens K."/>
            <person name="Taylor K."/>
            <person name="Taylor R.G."/>
            <person name="Tivey A."/>
            <person name="Walsh S.V."/>
            <person name="Warren T."/>
            <person name="Whitehead S."/>
            <person name="Woodward J.R."/>
            <person name="Volckaert G."/>
            <person name="Aert R."/>
            <person name="Robben J."/>
            <person name="Grymonprez B."/>
            <person name="Weltjens I."/>
            <person name="Vanstreels E."/>
            <person name="Rieger M."/>
            <person name="Schaefer M."/>
            <person name="Mueller-Auer S."/>
            <person name="Gabel C."/>
            <person name="Fuchs M."/>
            <person name="Duesterhoeft A."/>
            <person name="Fritzc C."/>
            <person name="Holzer E."/>
            <person name="Moestl D."/>
            <person name="Hilbert H."/>
            <person name="Borzym K."/>
            <person name="Langer I."/>
            <person name="Beck A."/>
            <person name="Lehrach H."/>
            <person name="Reinhardt R."/>
            <person name="Pohl T.M."/>
            <person name="Eger P."/>
            <person name="Zimmermann W."/>
            <person name="Wedler H."/>
            <person name="Wambutt R."/>
            <person name="Purnelle B."/>
            <person name="Goffeau A."/>
            <person name="Cadieu E."/>
            <person name="Dreano S."/>
            <person name="Gloux S."/>
            <person name="Lelaure V."/>
            <person name="Mottier S."/>
            <person name="Galibert F."/>
            <person name="Aves S.J."/>
            <person name="Xiang Z."/>
            <person name="Hunt C."/>
            <person name="Moore K."/>
            <person name="Hurst S.M."/>
            <person name="Lucas M."/>
            <person name="Rochet M."/>
            <person name="Gaillardin C."/>
            <person name="Tallada V.A."/>
            <person name="Garzon A."/>
            <person name="Thode G."/>
            <person name="Daga R.R."/>
            <person name="Cruzado L."/>
            <person name="Jimenez J."/>
            <person name="Sanchez M."/>
            <person name="del Rey F."/>
            <person name="Benito J."/>
            <person name="Dominguez A."/>
            <person name="Revuelta J.L."/>
            <person name="Moreno S."/>
            <person name="Armstrong J."/>
            <person name="Forsburg S.L."/>
            <person name="Cerutti L."/>
            <person name="Lowe T."/>
            <person name="McCombie W.R."/>
            <person name="Paulsen I."/>
            <person name="Potashkin J."/>
            <person name="Shpakovski G.V."/>
            <person name="Ussery D."/>
            <person name="Barrell B.G."/>
            <person name="Nurse P."/>
        </authorList>
    </citation>
    <scope>NUCLEOTIDE SEQUENCE [LARGE SCALE GENOMIC DNA]</scope>
    <source>
        <strain>972 / ATCC 24843</strain>
    </source>
</reference>
<reference evidence="4" key="2">
    <citation type="journal article" date="2006" name="Nat. Biotechnol.">
        <title>ORFeome cloning and global analysis of protein localization in the fission yeast Schizosaccharomyces pombe.</title>
        <authorList>
            <person name="Matsuyama A."/>
            <person name="Arai R."/>
            <person name="Yashiroda Y."/>
            <person name="Shirai A."/>
            <person name="Kamata A."/>
            <person name="Sekido S."/>
            <person name="Kobayashi Y."/>
            <person name="Hashimoto A."/>
            <person name="Hamamoto M."/>
            <person name="Hiraoka Y."/>
            <person name="Horinouchi S."/>
            <person name="Yoshida M."/>
        </authorList>
    </citation>
    <scope>SUBCELLULAR LOCATION [LARGE SCALE ANALYSIS]</scope>
</reference>
<evidence type="ECO:0000250" key="1">
    <source>
        <dbReference type="UniProtKB" id="P00815"/>
    </source>
</evidence>
<evidence type="ECO:0000255" key="2"/>
<evidence type="ECO:0000269" key="3">
    <source>
    </source>
</evidence>
<evidence type="ECO:0000305" key="4"/>
<evidence type="ECO:0000312" key="5">
    <source>
        <dbReference type="EMBL" id="CAA18379.1"/>
    </source>
</evidence>
<accession>O59667</accession>
<protein>
    <recommendedName>
        <fullName evidence="1 5">Histidine biosynthesis bifunctional protein his7</fullName>
    </recommendedName>
    <domain>
        <recommendedName>
            <fullName evidence="1">Phosphoribosyl-AMP cyclohydrolase</fullName>
            <ecNumber>3.5.4.19</ecNumber>
        </recommendedName>
    </domain>
    <domain>
        <recommendedName>
            <fullName evidence="1">Phosphoribosyl-ATP pyrophosphatase</fullName>
            <ecNumber>3.6.1.31</ecNumber>
        </recommendedName>
    </domain>
</protein>
<organism>
    <name type="scientific">Schizosaccharomyces pombe (strain 972 / ATCC 24843)</name>
    <name type="common">Fission yeast</name>
    <dbReference type="NCBI Taxonomy" id="284812"/>
    <lineage>
        <taxon>Eukaryota</taxon>
        <taxon>Fungi</taxon>
        <taxon>Dikarya</taxon>
        <taxon>Ascomycota</taxon>
        <taxon>Taphrinomycotina</taxon>
        <taxon>Schizosaccharomycetes</taxon>
        <taxon>Schizosaccharomycetales</taxon>
        <taxon>Schizosaccharomycetaceae</taxon>
        <taxon>Schizosaccharomyces</taxon>
    </lineage>
</organism>
<comment type="catalytic activity">
    <reaction>
        <text>1-(5-phospho-beta-D-ribosyl)-5'-AMP + H2O = 1-(5-phospho-beta-D-ribosyl)-5-[(5-phospho-beta-D-ribosylamino)methylideneamino]imidazole-4-carboxamide</text>
        <dbReference type="Rhea" id="RHEA:20049"/>
        <dbReference type="ChEBI" id="CHEBI:15377"/>
        <dbReference type="ChEBI" id="CHEBI:58435"/>
        <dbReference type="ChEBI" id="CHEBI:59457"/>
        <dbReference type="EC" id="3.5.4.19"/>
    </reaction>
</comment>
<comment type="catalytic activity">
    <reaction>
        <text>1-(5-phospho-beta-D-ribosyl)-ATP + H2O = 1-(5-phospho-beta-D-ribosyl)-5'-AMP + diphosphate + H(+)</text>
        <dbReference type="Rhea" id="RHEA:22828"/>
        <dbReference type="ChEBI" id="CHEBI:15377"/>
        <dbReference type="ChEBI" id="CHEBI:15378"/>
        <dbReference type="ChEBI" id="CHEBI:33019"/>
        <dbReference type="ChEBI" id="CHEBI:59457"/>
        <dbReference type="ChEBI" id="CHEBI:73183"/>
        <dbReference type="EC" id="3.6.1.31"/>
    </reaction>
</comment>
<comment type="pathway">
    <text evidence="1">Amino-acid biosynthesis; L-histidine biosynthesis; L-histidine from 5-phospho-alpha-D-ribose 1-diphosphate: step 2/9.</text>
</comment>
<comment type="pathway">
    <text evidence="1">Amino-acid biosynthesis; L-histidine biosynthesis; L-histidine from 5-phospho-alpha-D-ribose 1-diphosphate: step 3/9.</text>
</comment>
<comment type="subcellular location">
    <subcellularLocation>
        <location evidence="3">Cytoplasm</location>
    </subcellularLocation>
</comment>
<comment type="caution">
    <text evidence="4">In contrast to other fungi which have a single histidine biosynthesis trifunctional protein, 2 proteins are present in S.pombe to ensure these functions: his7 (phosphoribosyl-AMP cyclohydrolase and phosphoribosyl-ATP pyrophosphatase activities) and his2 (histidinol dehydrogenase activity).</text>
</comment>
<proteinExistence type="inferred from homology"/>
<gene>
    <name evidence="5" type="primary">his7</name>
    <name type="ORF">SPBC29A3.02c</name>
</gene>
<keyword id="KW-0028">Amino-acid biosynthesis</keyword>
<keyword id="KW-0067">ATP-binding</keyword>
<keyword id="KW-0963">Cytoplasm</keyword>
<keyword id="KW-0368">Histidine biosynthesis</keyword>
<keyword id="KW-0378">Hydrolase</keyword>
<keyword id="KW-0511">Multifunctional enzyme</keyword>
<keyword id="KW-0547">Nucleotide-binding</keyword>
<keyword id="KW-1185">Reference proteome</keyword>
<name>HIS2_SCHPO</name>
<sequence length="417" mass="46183">MALLPFFDLTNFESDASEELGWLKYVGRVQTRVFPQHFKDNLEKVRKISETIDVIVDTTAELGPEACVNLLNAGALAILVNEEMLNELADISPNRLVLKTDTTDIGKIEKLSQVAGSIQWIGSAENYPPDFFERASKIIHKAVMPEGGGRTLYLEFPEQPSMEVLKSFSVHSVVPVLSSSFLTVKPAEEPKKLSLADLILISANTDREDGLFSTLVVNELGIALGLVYSSKESVAESLKTGTGVYQSRKRGLWYKGASSGAVQHLIHIDVDCDEDCLRFVVYQTGKGFCHLDTLHCFGQASGLCQLEKTLIDRKNNAPEGSYTARLFSDPKLLRAKIMEEAEELCDATTKENVIWEMADLMYFAITRCVGSGVSLNDISRHLDLKHRKVTRRKGDAKVAWQEKLKDKGGVANTSYTA</sequence>
<feature type="chain" id="PRO_0000352786" description="Histidine biosynthesis bifunctional protein his7">
    <location>
        <begin position="1"/>
        <end position="417"/>
    </location>
</feature>
<feature type="region of interest" description="Phosphoribosyl-AMP cyclohydrolase" evidence="2">
    <location>
        <begin position="225"/>
        <end position="299"/>
    </location>
</feature>
<feature type="region of interest" description="Phosphoribosyl-ATP pyrophosphohydrolase" evidence="2">
    <location>
        <begin position="303"/>
        <end position="387"/>
    </location>
</feature>